<proteinExistence type="inferred from homology"/>
<evidence type="ECO:0000255" key="1">
    <source>
        <dbReference type="PROSITE-ProRule" id="PRU00448"/>
    </source>
</evidence>
<evidence type="ECO:0000305" key="2"/>
<name>CALM_CANAX</name>
<keyword id="KW-0106">Calcium</keyword>
<keyword id="KW-0479">Metal-binding</keyword>
<keyword id="KW-0677">Repeat</keyword>
<reference key="1">
    <citation type="journal article" date="1991" name="Gene">
        <title>The isolation and characterization of a calmodulin-encoding gene (CMD1) from the dimorphic fungus Candida albicans.</title>
        <authorList>
            <person name="Saporito S.M."/>
            <person name="Sypherd P.S."/>
        </authorList>
    </citation>
    <scope>NUCLEOTIDE SEQUENCE [GENOMIC DNA]</scope>
</reference>
<organism>
    <name type="scientific">Candida albicans</name>
    <name type="common">Yeast</name>
    <dbReference type="NCBI Taxonomy" id="5476"/>
    <lineage>
        <taxon>Eukaryota</taxon>
        <taxon>Fungi</taxon>
        <taxon>Dikarya</taxon>
        <taxon>Ascomycota</taxon>
        <taxon>Saccharomycotina</taxon>
        <taxon>Pichiomycetes</taxon>
        <taxon>Debaryomycetaceae</taxon>
        <taxon>Candida/Lodderomyces clade</taxon>
        <taxon>Candida</taxon>
    </lineage>
</organism>
<dbReference type="EMBL" id="M61128">
    <property type="protein sequence ID" value="AAA34331.2"/>
    <property type="molecule type" value="Genomic_DNA"/>
</dbReference>
<dbReference type="PIR" id="JU0276">
    <property type="entry name" value="MCCKA"/>
</dbReference>
<dbReference type="SMR" id="P23286"/>
<dbReference type="VEuPathDB" id="FungiDB:C4_06030W_A"/>
<dbReference type="VEuPathDB" id="FungiDB:CAWG_03222"/>
<dbReference type="GO" id="GO:0016460">
    <property type="term" value="C:myosin II complex"/>
    <property type="evidence" value="ECO:0007669"/>
    <property type="project" value="TreeGrafter"/>
</dbReference>
<dbReference type="GO" id="GO:0005509">
    <property type="term" value="F:calcium ion binding"/>
    <property type="evidence" value="ECO:0007669"/>
    <property type="project" value="InterPro"/>
</dbReference>
<dbReference type="CDD" id="cd00051">
    <property type="entry name" value="EFh"/>
    <property type="match status" value="2"/>
</dbReference>
<dbReference type="FunFam" id="1.10.238.10:FF:000257">
    <property type="entry name" value="Calmodulin"/>
    <property type="match status" value="1"/>
</dbReference>
<dbReference type="FunFam" id="1.10.238.10:FF:000006">
    <property type="entry name" value="Calmodulin 1"/>
    <property type="match status" value="1"/>
</dbReference>
<dbReference type="Gene3D" id="1.10.238.10">
    <property type="entry name" value="EF-hand"/>
    <property type="match status" value="3"/>
</dbReference>
<dbReference type="InterPro" id="IPR050230">
    <property type="entry name" value="CALM/Myosin/TropC-like"/>
</dbReference>
<dbReference type="InterPro" id="IPR011992">
    <property type="entry name" value="EF-hand-dom_pair"/>
</dbReference>
<dbReference type="InterPro" id="IPR018247">
    <property type="entry name" value="EF_Hand_1_Ca_BS"/>
</dbReference>
<dbReference type="InterPro" id="IPR002048">
    <property type="entry name" value="EF_hand_dom"/>
</dbReference>
<dbReference type="PANTHER" id="PTHR23048:SF0">
    <property type="entry name" value="CALMODULIN LIKE 3"/>
    <property type="match status" value="1"/>
</dbReference>
<dbReference type="PANTHER" id="PTHR23048">
    <property type="entry name" value="MYOSIN LIGHT CHAIN 1, 3"/>
    <property type="match status" value="1"/>
</dbReference>
<dbReference type="Pfam" id="PF13499">
    <property type="entry name" value="EF-hand_7"/>
    <property type="match status" value="2"/>
</dbReference>
<dbReference type="SMART" id="SM00054">
    <property type="entry name" value="EFh"/>
    <property type="match status" value="4"/>
</dbReference>
<dbReference type="SUPFAM" id="SSF47473">
    <property type="entry name" value="EF-hand"/>
    <property type="match status" value="1"/>
</dbReference>
<dbReference type="PROSITE" id="PS00018">
    <property type="entry name" value="EF_HAND_1"/>
    <property type="match status" value="4"/>
</dbReference>
<dbReference type="PROSITE" id="PS50222">
    <property type="entry name" value="EF_HAND_2"/>
    <property type="match status" value="4"/>
</dbReference>
<gene>
    <name type="primary">CMD1</name>
</gene>
<comment type="function">
    <text>Calmodulin mediates the control of a large number of enzymes, ion channels and other proteins by Ca(2+). Among the enzymes to be stimulated by the calmodulin-Ca(2+) complex are a number of protein kinases and phosphatases.</text>
</comment>
<comment type="miscellaneous">
    <text>This protein has four functional calcium-binding sites.</text>
</comment>
<comment type="similarity">
    <text evidence="2">Belongs to the calmodulin family.</text>
</comment>
<protein>
    <recommendedName>
        <fullName>Calmodulin</fullName>
        <shortName>CaM</shortName>
    </recommendedName>
</protein>
<sequence>MAEKLSEQQIAEFKEAFSLFDKDSDGKITTKELGTVMRSLGQNPSESELTDMINEVDVNSDGSIDFPEFLTMMARKMKDTDSEAEIAEAFKVFDRNGDGKISAAELRHLLTSIGEKLSDADVDQMIKEADTNNDGEIDIQEFTSLLAAK</sequence>
<accession>P23286</accession>
<feature type="chain" id="PRO_0000198315" description="Calmodulin">
    <location>
        <begin position="1"/>
        <end position="149"/>
    </location>
</feature>
<feature type="domain" description="EF-hand 1" evidence="1">
    <location>
        <begin position="8"/>
        <end position="43"/>
    </location>
</feature>
<feature type="domain" description="EF-hand 2" evidence="1">
    <location>
        <begin position="44"/>
        <end position="79"/>
    </location>
</feature>
<feature type="domain" description="EF-hand 3" evidence="1">
    <location>
        <begin position="81"/>
        <end position="116"/>
    </location>
</feature>
<feature type="domain" description="EF-hand 4" evidence="1">
    <location>
        <begin position="117"/>
        <end position="149"/>
    </location>
</feature>
<feature type="binding site" evidence="1">
    <location>
        <position position="21"/>
    </location>
    <ligand>
        <name>Ca(2+)</name>
        <dbReference type="ChEBI" id="CHEBI:29108"/>
        <label>1</label>
    </ligand>
</feature>
<feature type="binding site" evidence="1">
    <location>
        <position position="23"/>
    </location>
    <ligand>
        <name>Ca(2+)</name>
        <dbReference type="ChEBI" id="CHEBI:29108"/>
        <label>1</label>
    </ligand>
</feature>
<feature type="binding site" evidence="1">
    <location>
        <position position="25"/>
    </location>
    <ligand>
        <name>Ca(2+)</name>
        <dbReference type="ChEBI" id="CHEBI:29108"/>
        <label>1</label>
    </ligand>
</feature>
<feature type="binding site" evidence="1">
    <location>
        <position position="27"/>
    </location>
    <ligand>
        <name>Ca(2+)</name>
        <dbReference type="ChEBI" id="CHEBI:29108"/>
        <label>1</label>
    </ligand>
</feature>
<feature type="binding site" evidence="1">
    <location>
        <position position="32"/>
    </location>
    <ligand>
        <name>Ca(2+)</name>
        <dbReference type="ChEBI" id="CHEBI:29108"/>
        <label>1</label>
    </ligand>
</feature>
<feature type="binding site" evidence="1">
    <location>
        <position position="57"/>
    </location>
    <ligand>
        <name>Ca(2+)</name>
        <dbReference type="ChEBI" id="CHEBI:29108"/>
        <label>2</label>
    </ligand>
</feature>
<feature type="binding site" evidence="1">
    <location>
        <position position="59"/>
    </location>
    <ligand>
        <name>Ca(2+)</name>
        <dbReference type="ChEBI" id="CHEBI:29108"/>
        <label>2</label>
    </ligand>
</feature>
<feature type="binding site" evidence="1">
    <location>
        <position position="61"/>
    </location>
    <ligand>
        <name>Ca(2+)</name>
        <dbReference type="ChEBI" id="CHEBI:29108"/>
        <label>2</label>
    </ligand>
</feature>
<feature type="binding site" evidence="1">
    <location>
        <position position="63"/>
    </location>
    <ligand>
        <name>Ca(2+)</name>
        <dbReference type="ChEBI" id="CHEBI:29108"/>
        <label>2</label>
    </ligand>
</feature>
<feature type="binding site" evidence="1">
    <location>
        <position position="68"/>
    </location>
    <ligand>
        <name>Ca(2+)</name>
        <dbReference type="ChEBI" id="CHEBI:29108"/>
        <label>2</label>
    </ligand>
</feature>
<feature type="binding site" evidence="1">
    <location>
        <position position="94"/>
    </location>
    <ligand>
        <name>Ca(2+)</name>
        <dbReference type="ChEBI" id="CHEBI:29108"/>
        <label>3</label>
    </ligand>
</feature>
<feature type="binding site" evidence="1">
    <location>
        <position position="96"/>
    </location>
    <ligand>
        <name>Ca(2+)</name>
        <dbReference type="ChEBI" id="CHEBI:29108"/>
        <label>3</label>
    </ligand>
</feature>
<feature type="binding site" evidence="1">
    <location>
        <position position="98"/>
    </location>
    <ligand>
        <name>Ca(2+)</name>
        <dbReference type="ChEBI" id="CHEBI:29108"/>
        <label>3</label>
    </ligand>
</feature>
<feature type="binding site" evidence="1">
    <location>
        <position position="100"/>
    </location>
    <ligand>
        <name>Ca(2+)</name>
        <dbReference type="ChEBI" id="CHEBI:29108"/>
        <label>3</label>
    </ligand>
</feature>
<feature type="binding site" evidence="1">
    <location>
        <position position="105"/>
    </location>
    <ligand>
        <name>Ca(2+)</name>
        <dbReference type="ChEBI" id="CHEBI:29108"/>
        <label>3</label>
    </ligand>
</feature>
<feature type="binding site" evidence="1">
    <location>
        <position position="130"/>
    </location>
    <ligand>
        <name>Ca(2+)</name>
        <dbReference type="ChEBI" id="CHEBI:29108"/>
        <label>4</label>
    </ligand>
</feature>
<feature type="binding site" evidence="1">
    <location>
        <position position="132"/>
    </location>
    <ligand>
        <name>Ca(2+)</name>
        <dbReference type="ChEBI" id="CHEBI:29108"/>
        <label>4</label>
    </ligand>
</feature>
<feature type="binding site" evidence="1">
    <location>
        <position position="134"/>
    </location>
    <ligand>
        <name>Ca(2+)</name>
        <dbReference type="ChEBI" id="CHEBI:29108"/>
        <label>4</label>
    </ligand>
</feature>
<feature type="binding site" evidence="1">
    <location>
        <position position="136"/>
    </location>
    <ligand>
        <name>Ca(2+)</name>
        <dbReference type="ChEBI" id="CHEBI:29108"/>
        <label>4</label>
    </ligand>
</feature>
<feature type="binding site" evidence="1">
    <location>
        <position position="141"/>
    </location>
    <ligand>
        <name>Ca(2+)</name>
        <dbReference type="ChEBI" id="CHEBI:29108"/>
        <label>4</label>
    </ligand>
</feature>